<organism>
    <name type="scientific">Rhodococcus jostii (strain RHA1)</name>
    <dbReference type="NCBI Taxonomy" id="101510"/>
    <lineage>
        <taxon>Bacteria</taxon>
        <taxon>Bacillati</taxon>
        <taxon>Actinomycetota</taxon>
        <taxon>Actinomycetes</taxon>
        <taxon>Mycobacteriales</taxon>
        <taxon>Nocardiaceae</taxon>
        <taxon>Rhodococcus</taxon>
    </lineage>
</organism>
<comment type="function">
    <text evidence="1">NDH-1 shuttles electrons from NADH, via FMN and iron-sulfur (Fe-S) centers, to quinones in the respiratory chain. The immediate electron acceptor for the enzyme in this species is believed to be ubiquinone. Couples the redox reaction to proton translocation (for every two electrons transferred, four hydrogen ions are translocated across the cytoplasmic membrane), and thus conserves the redox energy in a proton gradient.</text>
</comment>
<comment type="catalytic activity">
    <reaction evidence="1">
        <text>a quinone + NADH + 5 H(+)(in) = a quinol + NAD(+) + 4 H(+)(out)</text>
        <dbReference type="Rhea" id="RHEA:57888"/>
        <dbReference type="ChEBI" id="CHEBI:15378"/>
        <dbReference type="ChEBI" id="CHEBI:24646"/>
        <dbReference type="ChEBI" id="CHEBI:57540"/>
        <dbReference type="ChEBI" id="CHEBI:57945"/>
        <dbReference type="ChEBI" id="CHEBI:132124"/>
    </reaction>
</comment>
<comment type="cofactor">
    <cofactor evidence="1">
        <name>[4Fe-4S] cluster</name>
        <dbReference type="ChEBI" id="CHEBI:49883"/>
    </cofactor>
    <text evidence="1">Binds 2 [4Fe-4S] clusters per subunit.</text>
</comment>
<comment type="subunit">
    <text evidence="1">NDH-1 is composed of 14 different subunits. Subunits NuoA, H, J, K, L, M, N constitute the membrane sector of the complex.</text>
</comment>
<comment type="subcellular location">
    <subcellularLocation>
        <location evidence="1">Cell membrane</location>
        <topology evidence="1">Peripheral membrane protein</topology>
    </subcellularLocation>
</comment>
<comment type="similarity">
    <text evidence="1">Belongs to the complex I 23 kDa subunit family.</text>
</comment>
<sequence>MTKFLGPIAGFGVTFSTMFKKSNTEFYPEEKVPTAPRYHGRHQLNRYADGLEKCIGCELCAWACPADAIYVEGADNTDEERFSPGERYGQVYQINYLRCIGCGLCIEACPTRALTMTNEYEMADDNRAGLIYEKDRLLAPLEPGMVESPHPMAPGATAEDYYRGTVTGGAAAAAQDESEVDDTAGDRP</sequence>
<evidence type="ECO:0000255" key="1">
    <source>
        <dbReference type="HAMAP-Rule" id="MF_01351"/>
    </source>
</evidence>
<evidence type="ECO:0000256" key="2">
    <source>
        <dbReference type="SAM" id="MobiDB-lite"/>
    </source>
</evidence>
<name>NUOI_RHOJR</name>
<gene>
    <name evidence="1" type="primary">nuoI</name>
    <name type="ordered locus">RHA1_ro05917</name>
</gene>
<feature type="chain" id="PRO_0000298541" description="NADH-quinone oxidoreductase subunit I">
    <location>
        <begin position="1"/>
        <end position="188"/>
    </location>
</feature>
<feature type="domain" description="4Fe-4S ferredoxin-type 1" evidence="1">
    <location>
        <begin position="44"/>
        <end position="74"/>
    </location>
</feature>
<feature type="domain" description="4Fe-4S ferredoxin-type 2" evidence="1">
    <location>
        <begin position="90"/>
        <end position="119"/>
    </location>
</feature>
<feature type="region of interest" description="Disordered" evidence="2">
    <location>
        <begin position="167"/>
        <end position="188"/>
    </location>
</feature>
<feature type="compositionally biased region" description="Acidic residues" evidence="2">
    <location>
        <begin position="176"/>
        <end position="188"/>
    </location>
</feature>
<feature type="binding site" evidence="1">
    <location>
        <position position="54"/>
    </location>
    <ligand>
        <name>[4Fe-4S] cluster</name>
        <dbReference type="ChEBI" id="CHEBI:49883"/>
        <label>1</label>
    </ligand>
</feature>
<feature type="binding site" evidence="1">
    <location>
        <position position="57"/>
    </location>
    <ligand>
        <name>[4Fe-4S] cluster</name>
        <dbReference type="ChEBI" id="CHEBI:49883"/>
        <label>1</label>
    </ligand>
</feature>
<feature type="binding site" evidence="1">
    <location>
        <position position="60"/>
    </location>
    <ligand>
        <name>[4Fe-4S] cluster</name>
        <dbReference type="ChEBI" id="CHEBI:49883"/>
        <label>1</label>
    </ligand>
</feature>
<feature type="binding site" evidence="1">
    <location>
        <position position="64"/>
    </location>
    <ligand>
        <name>[4Fe-4S] cluster</name>
        <dbReference type="ChEBI" id="CHEBI:49883"/>
        <label>2</label>
    </ligand>
</feature>
<feature type="binding site" evidence="1">
    <location>
        <position position="99"/>
    </location>
    <ligand>
        <name>[4Fe-4S] cluster</name>
        <dbReference type="ChEBI" id="CHEBI:49883"/>
        <label>2</label>
    </ligand>
</feature>
<feature type="binding site" evidence="1">
    <location>
        <position position="102"/>
    </location>
    <ligand>
        <name>[4Fe-4S] cluster</name>
        <dbReference type="ChEBI" id="CHEBI:49883"/>
        <label>2</label>
    </ligand>
</feature>
<feature type="binding site" evidence="1">
    <location>
        <position position="105"/>
    </location>
    <ligand>
        <name>[4Fe-4S] cluster</name>
        <dbReference type="ChEBI" id="CHEBI:49883"/>
        <label>2</label>
    </ligand>
</feature>
<feature type="binding site" evidence="1">
    <location>
        <position position="109"/>
    </location>
    <ligand>
        <name>[4Fe-4S] cluster</name>
        <dbReference type="ChEBI" id="CHEBI:49883"/>
        <label>1</label>
    </ligand>
</feature>
<protein>
    <recommendedName>
        <fullName evidence="1">NADH-quinone oxidoreductase subunit I</fullName>
        <ecNumber evidence="1">7.1.1.-</ecNumber>
    </recommendedName>
    <alternativeName>
        <fullName evidence="1">NADH dehydrogenase I subunit I</fullName>
    </alternativeName>
    <alternativeName>
        <fullName evidence="1">NDH-1 subunit I</fullName>
    </alternativeName>
</protein>
<accession>Q0S442</accession>
<keyword id="KW-0004">4Fe-4S</keyword>
<keyword id="KW-1003">Cell membrane</keyword>
<keyword id="KW-0408">Iron</keyword>
<keyword id="KW-0411">Iron-sulfur</keyword>
<keyword id="KW-0472">Membrane</keyword>
<keyword id="KW-0479">Metal-binding</keyword>
<keyword id="KW-0520">NAD</keyword>
<keyword id="KW-0874">Quinone</keyword>
<keyword id="KW-0677">Repeat</keyword>
<keyword id="KW-1278">Translocase</keyword>
<keyword id="KW-0830">Ubiquinone</keyword>
<proteinExistence type="inferred from homology"/>
<dbReference type="EC" id="7.1.1.-" evidence="1"/>
<dbReference type="EMBL" id="CP000431">
    <property type="protein sequence ID" value="ABG97694.1"/>
    <property type="molecule type" value="Genomic_DNA"/>
</dbReference>
<dbReference type="RefSeq" id="WP_011598000.1">
    <property type="nucleotide sequence ID" value="NC_008268.1"/>
</dbReference>
<dbReference type="SMR" id="Q0S442"/>
<dbReference type="KEGG" id="rha:RHA1_ro05917"/>
<dbReference type="PATRIC" id="fig|101510.16.peg.5963"/>
<dbReference type="eggNOG" id="COG1143">
    <property type="taxonomic scope" value="Bacteria"/>
</dbReference>
<dbReference type="HOGENOM" id="CLU_067218_4_0_11"/>
<dbReference type="OrthoDB" id="9808559at2"/>
<dbReference type="Proteomes" id="UP000008710">
    <property type="component" value="Chromosome"/>
</dbReference>
<dbReference type="GO" id="GO:0005886">
    <property type="term" value="C:plasma membrane"/>
    <property type="evidence" value="ECO:0007669"/>
    <property type="project" value="UniProtKB-SubCell"/>
</dbReference>
<dbReference type="GO" id="GO:0051539">
    <property type="term" value="F:4 iron, 4 sulfur cluster binding"/>
    <property type="evidence" value="ECO:0007669"/>
    <property type="project" value="UniProtKB-KW"/>
</dbReference>
<dbReference type="GO" id="GO:0005506">
    <property type="term" value="F:iron ion binding"/>
    <property type="evidence" value="ECO:0007669"/>
    <property type="project" value="UniProtKB-UniRule"/>
</dbReference>
<dbReference type="GO" id="GO:0050136">
    <property type="term" value="F:NADH:ubiquinone reductase (non-electrogenic) activity"/>
    <property type="evidence" value="ECO:0007669"/>
    <property type="project" value="UniProtKB-UniRule"/>
</dbReference>
<dbReference type="GO" id="GO:0048038">
    <property type="term" value="F:quinone binding"/>
    <property type="evidence" value="ECO:0007669"/>
    <property type="project" value="UniProtKB-KW"/>
</dbReference>
<dbReference type="GO" id="GO:0009060">
    <property type="term" value="P:aerobic respiration"/>
    <property type="evidence" value="ECO:0007669"/>
    <property type="project" value="TreeGrafter"/>
</dbReference>
<dbReference type="FunFam" id="3.30.70.3270:FF:000007">
    <property type="entry name" value="NADH-quinone oxidoreductase subunit I"/>
    <property type="match status" value="1"/>
</dbReference>
<dbReference type="Gene3D" id="3.30.70.3270">
    <property type="match status" value="1"/>
</dbReference>
<dbReference type="HAMAP" id="MF_01351">
    <property type="entry name" value="NDH1_NuoI"/>
    <property type="match status" value="1"/>
</dbReference>
<dbReference type="InterPro" id="IPR017896">
    <property type="entry name" value="4Fe4S_Fe-S-bd"/>
</dbReference>
<dbReference type="InterPro" id="IPR017900">
    <property type="entry name" value="4Fe4S_Fe_S_CS"/>
</dbReference>
<dbReference type="InterPro" id="IPR010226">
    <property type="entry name" value="NADH_quinone_OxRdtase_chainI"/>
</dbReference>
<dbReference type="NCBIfam" id="TIGR01971">
    <property type="entry name" value="NuoI"/>
    <property type="match status" value="1"/>
</dbReference>
<dbReference type="NCBIfam" id="NF004537">
    <property type="entry name" value="PRK05888.1-3"/>
    <property type="match status" value="1"/>
</dbReference>
<dbReference type="PANTHER" id="PTHR10849:SF20">
    <property type="entry name" value="NADH DEHYDROGENASE [UBIQUINONE] IRON-SULFUR PROTEIN 8, MITOCHONDRIAL"/>
    <property type="match status" value="1"/>
</dbReference>
<dbReference type="PANTHER" id="PTHR10849">
    <property type="entry name" value="NADH DEHYDROGENASE UBIQUINONE IRON-SULFUR PROTEIN 8, MITOCHONDRIAL"/>
    <property type="match status" value="1"/>
</dbReference>
<dbReference type="Pfam" id="PF12838">
    <property type="entry name" value="Fer4_7"/>
    <property type="match status" value="1"/>
</dbReference>
<dbReference type="SUPFAM" id="SSF54862">
    <property type="entry name" value="4Fe-4S ferredoxins"/>
    <property type="match status" value="1"/>
</dbReference>
<dbReference type="PROSITE" id="PS00198">
    <property type="entry name" value="4FE4S_FER_1"/>
    <property type="match status" value="2"/>
</dbReference>
<dbReference type="PROSITE" id="PS51379">
    <property type="entry name" value="4FE4S_FER_2"/>
    <property type="match status" value="2"/>
</dbReference>
<reference key="1">
    <citation type="journal article" date="2006" name="Proc. Natl. Acad. Sci. U.S.A.">
        <title>The complete genome of Rhodococcus sp. RHA1 provides insights into a catabolic powerhouse.</title>
        <authorList>
            <person name="McLeod M.P."/>
            <person name="Warren R.L."/>
            <person name="Hsiao W.W.L."/>
            <person name="Araki N."/>
            <person name="Myhre M."/>
            <person name="Fernandes C."/>
            <person name="Miyazawa D."/>
            <person name="Wong W."/>
            <person name="Lillquist A.L."/>
            <person name="Wang D."/>
            <person name="Dosanjh M."/>
            <person name="Hara H."/>
            <person name="Petrescu A."/>
            <person name="Morin R.D."/>
            <person name="Yang G."/>
            <person name="Stott J.M."/>
            <person name="Schein J.E."/>
            <person name="Shin H."/>
            <person name="Smailus D."/>
            <person name="Siddiqui A.S."/>
            <person name="Marra M.A."/>
            <person name="Jones S.J.M."/>
            <person name="Holt R."/>
            <person name="Brinkman F.S.L."/>
            <person name="Miyauchi K."/>
            <person name="Fukuda M."/>
            <person name="Davies J.E."/>
            <person name="Mohn W.W."/>
            <person name="Eltis L.D."/>
        </authorList>
    </citation>
    <scope>NUCLEOTIDE SEQUENCE [LARGE SCALE GENOMIC DNA]</scope>
    <source>
        <strain>RHA1</strain>
    </source>
</reference>